<comment type="function">
    <text evidence="1">Involved in pyrimidine catabolism. May facilitate the hydrolysis of carbamate, a reaction that can also occur spontaneously.</text>
</comment>
<comment type="catalytic activity">
    <reaction evidence="1">
        <text>carbamate + 2 H(+) = NH4(+) + CO2</text>
        <dbReference type="Rhea" id="RHEA:15649"/>
        <dbReference type="ChEBI" id="CHEBI:13941"/>
        <dbReference type="ChEBI" id="CHEBI:15378"/>
        <dbReference type="ChEBI" id="CHEBI:16526"/>
        <dbReference type="ChEBI" id="CHEBI:28938"/>
    </reaction>
</comment>
<comment type="similarity">
    <text evidence="1">Belongs to the AB hydrolase superfamily. Hydrolase RutD family.</text>
</comment>
<protein>
    <recommendedName>
        <fullName evidence="1">Putative carbamate hydrolase RutD</fullName>
        <ecNumber evidence="1">3.5.1.-</ecNumber>
    </recommendedName>
    <alternativeName>
        <fullName evidence="1">Aminohydrolase</fullName>
    </alternativeName>
</protein>
<accession>C6UPN1</accession>
<reference key="1">
    <citation type="journal article" date="2009" name="Infect. Immun.">
        <title>Analysis of the genome of the Escherichia coli O157:H7 2006 spinach-associated outbreak isolate indicates candidate genes that may enhance virulence.</title>
        <authorList>
            <person name="Kulasekara B.R."/>
            <person name="Jacobs M."/>
            <person name="Zhou Y."/>
            <person name="Wu Z."/>
            <person name="Sims E."/>
            <person name="Saenphimmachak C."/>
            <person name="Rohmer L."/>
            <person name="Ritchie J.M."/>
            <person name="Radey M."/>
            <person name="McKevitt M."/>
            <person name="Freeman T.L."/>
            <person name="Hayden H."/>
            <person name="Haugen E."/>
            <person name="Gillett W."/>
            <person name="Fong C."/>
            <person name="Chang J."/>
            <person name="Beskhlebnaya V."/>
            <person name="Waldor M.K."/>
            <person name="Samadpour M."/>
            <person name="Whittam T.S."/>
            <person name="Kaul R."/>
            <person name="Brittnacher M."/>
            <person name="Miller S.I."/>
        </authorList>
    </citation>
    <scope>NUCLEOTIDE SEQUENCE [LARGE SCALE GENOMIC DNA]</scope>
    <source>
        <strain>TW14359 / EHEC</strain>
    </source>
</reference>
<feature type="chain" id="PRO_0000402953" description="Putative carbamate hydrolase RutD">
    <location>
        <begin position="1"/>
        <end position="266"/>
    </location>
</feature>
<name>RUTD_ECO5T</name>
<organism>
    <name type="scientific">Escherichia coli O157:H7 (strain TW14359 / EHEC)</name>
    <dbReference type="NCBI Taxonomy" id="544404"/>
    <lineage>
        <taxon>Bacteria</taxon>
        <taxon>Pseudomonadati</taxon>
        <taxon>Pseudomonadota</taxon>
        <taxon>Gammaproteobacteria</taxon>
        <taxon>Enterobacterales</taxon>
        <taxon>Enterobacteriaceae</taxon>
        <taxon>Escherichia</taxon>
    </lineage>
</organism>
<gene>
    <name evidence="1" type="primary">rutD</name>
    <name type="ordered locus">ECSP_1178</name>
</gene>
<sequence>MKLSLSPPPYADAPVVVLISGLGGSGSYWLPQLAVLEQEYQVVCYDQRGTGNNPDTLAEDYSITQMAAELHQALVAAGIEHYAVVGHALGALVGMQLALDHPASVTVLVCVNGWLRINAHTRRCFQVRERLLYSGGAQAWVEAQPLFLYPADWMAARAPRLEAEDALALAHFQGKNNLLRRLNALKRADFSHHADRIRCPVQIICASDDLLVPSACSSELHAALPDSQKMVMRYGGHACNVTDPETFNALLLNGLASLLHHREAAL</sequence>
<evidence type="ECO:0000255" key="1">
    <source>
        <dbReference type="HAMAP-Rule" id="MF_00832"/>
    </source>
</evidence>
<dbReference type="EC" id="3.5.1.-" evidence="1"/>
<dbReference type="EMBL" id="CP001368">
    <property type="protein sequence ID" value="ACT71026.1"/>
    <property type="molecule type" value="Genomic_DNA"/>
</dbReference>
<dbReference type="RefSeq" id="WP_001301780.1">
    <property type="nucleotide sequence ID" value="NC_013008.1"/>
</dbReference>
<dbReference type="SMR" id="C6UPN1"/>
<dbReference type="ESTHER" id="ecoli-rutD">
    <property type="family name" value="RutD"/>
</dbReference>
<dbReference type="KEGG" id="etw:ECSP_1178"/>
<dbReference type="HOGENOM" id="CLU_020336_50_1_6"/>
<dbReference type="GO" id="GO:0016811">
    <property type="term" value="F:hydrolase activity, acting on carbon-nitrogen (but not peptide) bonds, in linear amides"/>
    <property type="evidence" value="ECO:0007669"/>
    <property type="project" value="InterPro"/>
</dbReference>
<dbReference type="GO" id="GO:0019740">
    <property type="term" value="P:nitrogen utilization"/>
    <property type="evidence" value="ECO:0007669"/>
    <property type="project" value="UniProtKB-UniRule"/>
</dbReference>
<dbReference type="GO" id="GO:0006212">
    <property type="term" value="P:uracil catabolic process"/>
    <property type="evidence" value="ECO:0007669"/>
    <property type="project" value="UniProtKB-UniRule"/>
</dbReference>
<dbReference type="FunFam" id="3.40.50.1820:FF:000052">
    <property type="entry name" value="Putative aminoacrylate hydrolase RutD"/>
    <property type="match status" value="1"/>
</dbReference>
<dbReference type="Gene3D" id="3.40.50.1820">
    <property type="entry name" value="alpha/beta hydrolase"/>
    <property type="match status" value="1"/>
</dbReference>
<dbReference type="HAMAP" id="MF_00832">
    <property type="entry name" value="RutD"/>
    <property type="match status" value="1"/>
</dbReference>
<dbReference type="InterPro" id="IPR000073">
    <property type="entry name" value="AB_hydrolase_1"/>
</dbReference>
<dbReference type="InterPro" id="IPR029058">
    <property type="entry name" value="AB_hydrolase_fold"/>
</dbReference>
<dbReference type="InterPro" id="IPR050266">
    <property type="entry name" value="AB_hydrolase_sf"/>
</dbReference>
<dbReference type="InterPro" id="IPR019913">
    <property type="entry name" value="Pyrimidine_utilisation_RutD"/>
</dbReference>
<dbReference type="NCBIfam" id="TIGR03611">
    <property type="entry name" value="RutD"/>
    <property type="match status" value="1"/>
</dbReference>
<dbReference type="PANTHER" id="PTHR43798">
    <property type="entry name" value="MONOACYLGLYCEROL LIPASE"/>
    <property type="match status" value="1"/>
</dbReference>
<dbReference type="Pfam" id="PF00561">
    <property type="entry name" value="Abhydrolase_1"/>
    <property type="match status" value="1"/>
</dbReference>
<dbReference type="SUPFAM" id="SSF53474">
    <property type="entry name" value="alpha/beta-Hydrolases"/>
    <property type="match status" value="1"/>
</dbReference>
<proteinExistence type="inferred from homology"/>
<keyword id="KW-0378">Hydrolase</keyword>